<gene>
    <name evidence="1" type="primary">atpA</name>
    <name type="ordered locus">VP3071</name>
</gene>
<protein>
    <recommendedName>
        <fullName evidence="1">ATP synthase subunit alpha</fullName>
        <ecNumber evidence="1">7.1.2.2</ecNumber>
    </recommendedName>
    <alternativeName>
        <fullName evidence="1">ATP synthase F1 sector subunit alpha</fullName>
    </alternativeName>
    <alternativeName>
        <fullName evidence="1">F-ATPase subunit alpha</fullName>
    </alternativeName>
</protein>
<organism>
    <name type="scientific">Vibrio parahaemolyticus serotype O3:K6 (strain RIMD 2210633)</name>
    <dbReference type="NCBI Taxonomy" id="223926"/>
    <lineage>
        <taxon>Bacteria</taxon>
        <taxon>Pseudomonadati</taxon>
        <taxon>Pseudomonadota</taxon>
        <taxon>Gammaproteobacteria</taxon>
        <taxon>Vibrionales</taxon>
        <taxon>Vibrionaceae</taxon>
        <taxon>Vibrio</taxon>
    </lineage>
</organism>
<accession>Q87KA6</accession>
<comment type="function">
    <text evidence="1">Produces ATP from ADP in the presence of a proton gradient across the membrane. The alpha chain is a regulatory subunit.</text>
</comment>
<comment type="catalytic activity">
    <reaction evidence="1">
        <text>ATP + H2O + 4 H(+)(in) = ADP + phosphate + 5 H(+)(out)</text>
        <dbReference type="Rhea" id="RHEA:57720"/>
        <dbReference type="ChEBI" id="CHEBI:15377"/>
        <dbReference type="ChEBI" id="CHEBI:15378"/>
        <dbReference type="ChEBI" id="CHEBI:30616"/>
        <dbReference type="ChEBI" id="CHEBI:43474"/>
        <dbReference type="ChEBI" id="CHEBI:456216"/>
        <dbReference type="EC" id="7.1.2.2"/>
    </reaction>
</comment>
<comment type="subunit">
    <text evidence="1">F-type ATPases have 2 components, CF(1) - the catalytic core - and CF(0) - the membrane proton channel. CF(1) has five subunits: alpha(3), beta(3), gamma(1), delta(1), epsilon(1). CF(0) has three main subunits: a(1), b(2) and c(9-12). The alpha and beta chains form an alternating ring which encloses part of the gamma chain. CF(1) is attached to CF(0) by a central stalk formed by the gamma and epsilon chains, while a peripheral stalk is formed by the delta and b chains.</text>
</comment>
<comment type="subcellular location">
    <subcellularLocation>
        <location evidence="1">Cell inner membrane</location>
        <topology evidence="1">Peripheral membrane protein</topology>
    </subcellularLocation>
</comment>
<comment type="similarity">
    <text evidence="1">Belongs to the ATPase alpha/beta chains family.</text>
</comment>
<sequence>MHCSLNGDWSMQLNSTEISDLIKQRIESFEVVSEARNEGTIVSVSDGIIRIHGLADVMQGEMIELPGGRYALALNLERDSVGAVVMGPYADLKEGMKVTGTGRILEVPVGPELLGRVVNTLGEPIDGKGPIEAKLTSPVEVIAPGVIDRKSVDQPVQTGYKSVDSMIPIGRGQRELVIGDRQTGKTAMAIDAIINQKNSGIFSIYVAIGQKASTIANVVRKLEEHGALANTIVVVASASESAALQYLAPYAGCAMGEYFRDRGEDALIVYDDLSKQAVAYRQISLLLKRPPGREAFPGDVFYLHSRLLERAARVNEEYVERFTNGEVKGKTGSLTALPIIETQAGDVSAFVPTNVISITDGQIFLQTELFNAGVRPAVDPGISVSRVGGSAQTKIIKKLSGGIRTALAAYRELAAFAQFSSDLDEATKKQLDHGQKVTELMKQKQYAPMSVFDQALVIFAAERGYLDDVELNKVLDFEAALLSYARGQYAELAAEIDKSGAYNDEIEAQLKKLTDDFKATQTW</sequence>
<feature type="chain" id="PRO_0000238395" description="ATP synthase subunit alpha">
    <location>
        <begin position="1"/>
        <end position="523"/>
    </location>
</feature>
<feature type="binding site" evidence="1">
    <location>
        <begin position="179"/>
        <end position="186"/>
    </location>
    <ligand>
        <name>ATP</name>
        <dbReference type="ChEBI" id="CHEBI:30616"/>
    </ligand>
</feature>
<feature type="site" description="Required for activity" evidence="1">
    <location>
        <position position="383"/>
    </location>
</feature>
<dbReference type="EC" id="7.1.2.2" evidence="1"/>
<dbReference type="EMBL" id="BA000031">
    <property type="protein sequence ID" value="BAC61334.1"/>
    <property type="molecule type" value="Genomic_DNA"/>
</dbReference>
<dbReference type="RefSeq" id="NP_799450.1">
    <property type="nucleotide sequence ID" value="NC_004603.1"/>
</dbReference>
<dbReference type="SMR" id="Q87KA6"/>
<dbReference type="KEGG" id="vpa:VP3071"/>
<dbReference type="PATRIC" id="fig|223926.6.peg.2957"/>
<dbReference type="eggNOG" id="COG0056">
    <property type="taxonomic scope" value="Bacteria"/>
</dbReference>
<dbReference type="HOGENOM" id="CLU_010091_2_1_6"/>
<dbReference type="Proteomes" id="UP000002493">
    <property type="component" value="Chromosome 1"/>
</dbReference>
<dbReference type="GO" id="GO:0005886">
    <property type="term" value="C:plasma membrane"/>
    <property type="evidence" value="ECO:0007669"/>
    <property type="project" value="UniProtKB-SubCell"/>
</dbReference>
<dbReference type="GO" id="GO:0045259">
    <property type="term" value="C:proton-transporting ATP synthase complex"/>
    <property type="evidence" value="ECO:0007669"/>
    <property type="project" value="UniProtKB-KW"/>
</dbReference>
<dbReference type="GO" id="GO:0043531">
    <property type="term" value="F:ADP binding"/>
    <property type="evidence" value="ECO:0007669"/>
    <property type="project" value="TreeGrafter"/>
</dbReference>
<dbReference type="GO" id="GO:0005524">
    <property type="term" value="F:ATP binding"/>
    <property type="evidence" value="ECO:0007669"/>
    <property type="project" value="UniProtKB-UniRule"/>
</dbReference>
<dbReference type="GO" id="GO:0046933">
    <property type="term" value="F:proton-transporting ATP synthase activity, rotational mechanism"/>
    <property type="evidence" value="ECO:0007669"/>
    <property type="project" value="UniProtKB-UniRule"/>
</dbReference>
<dbReference type="CDD" id="cd18113">
    <property type="entry name" value="ATP-synt_F1_alpha_C"/>
    <property type="match status" value="1"/>
</dbReference>
<dbReference type="CDD" id="cd18116">
    <property type="entry name" value="ATP-synt_F1_alpha_N"/>
    <property type="match status" value="1"/>
</dbReference>
<dbReference type="CDD" id="cd01132">
    <property type="entry name" value="F1-ATPase_alpha_CD"/>
    <property type="match status" value="1"/>
</dbReference>
<dbReference type="FunFam" id="1.20.150.20:FF:000001">
    <property type="entry name" value="ATP synthase subunit alpha"/>
    <property type="match status" value="1"/>
</dbReference>
<dbReference type="FunFam" id="2.40.30.20:FF:000001">
    <property type="entry name" value="ATP synthase subunit alpha"/>
    <property type="match status" value="1"/>
</dbReference>
<dbReference type="FunFam" id="3.40.50.300:FF:000002">
    <property type="entry name" value="ATP synthase subunit alpha"/>
    <property type="match status" value="1"/>
</dbReference>
<dbReference type="Gene3D" id="2.40.30.20">
    <property type="match status" value="1"/>
</dbReference>
<dbReference type="Gene3D" id="1.20.150.20">
    <property type="entry name" value="ATP synthase alpha/beta chain, C-terminal domain"/>
    <property type="match status" value="1"/>
</dbReference>
<dbReference type="Gene3D" id="3.40.50.300">
    <property type="entry name" value="P-loop containing nucleotide triphosphate hydrolases"/>
    <property type="match status" value="1"/>
</dbReference>
<dbReference type="HAMAP" id="MF_01346">
    <property type="entry name" value="ATP_synth_alpha_bact"/>
    <property type="match status" value="1"/>
</dbReference>
<dbReference type="InterPro" id="IPR023366">
    <property type="entry name" value="ATP_synth_asu-like_sf"/>
</dbReference>
<dbReference type="InterPro" id="IPR000793">
    <property type="entry name" value="ATP_synth_asu_C"/>
</dbReference>
<dbReference type="InterPro" id="IPR038376">
    <property type="entry name" value="ATP_synth_asu_C_sf"/>
</dbReference>
<dbReference type="InterPro" id="IPR033732">
    <property type="entry name" value="ATP_synth_F1_a_nt-bd_dom"/>
</dbReference>
<dbReference type="InterPro" id="IPR005294">
    <property type="entry name" value="ATP_synth_F1_asu"/>
</dbReference>
<dbReference type="InterPro" id="IPR020003">
    <property type="entry name" value="ATPase_a/bsu_AS"/>
</dbReference>
<dbReference type="InterPro" id="IPR004100">
    <property type="entry name" value="ATPase_F1/V1/A1_a/bsu_N"/>
</dbReference>
<dbReference type="InterPro" id="IPR036121">
    <property type="entry name" value="ATPase_F1/V1/A1_a/bsu_N_sf"/>
</dbReference>
<dbReference type="InterPro" id="IPR000194">
    <property type="entry name" value="ATPase_F1/V1/A1_a/bsu_nucl-bd"/>
</dbReference>
<dbReference type="InterPro" id="IPR027417">
    <property type="entry name" value="P-loop_NTPase"/>
</dbReference>
<dbReference type="NCBIfam" id="TIGR00962">
    <property type="entry name" value="atpA"/>
    <property type="match status" value="1"/>
</dbReference>
<dbReference type="NCBIfam" id="NF009884">
    <property type="entry name" value="PRK13343.1"/>
    <property type="match status" value="1"/>
</dbReference>
<dbReference type="PANTHER" id="PTHR48082">
    <property type="entry name" value="ATP SYNTHASE SUBUNIT ALPHA, MITOCHONDRIAL"/>
    <property type="match status" value="1"/>
</dbReference>
<dbReference type="PANTHER" id="PTHR48082:SF2">
    <property type="entry name" value="ATP SYNTHASE SUBUNIT ALPHA, MITOCHONDRIAL"/>
    <property type="match status" value="1"/>
</dbReference>
<dbReference type="Pfam" id="PF00006">
    <property type="entry name" value="ATP-synt_ab"/>
    <property type="match status" value="1"/>
</dbReference>
<dbReference type="Pfam" id="PF00306">
    <property type="entry name" value="ATP-synt_ab_C"/>
    <property type="match status" value="1"/>
</dbReference>
<dbReference type="Pfam" id="PF02874">
    <property type="entry name" value="ATP-synt_ab_N"/>
    <property type="match status" value="1"/>
</dbReference>
<dbReference type="SUPFAM" id="SSF47917">
    <property type="entry name" value="C-terminal domain of alpha and beta subunits of F1 ATP synthase"/>
    <property type="match status" value="1"/>
</dbReference>
<dbReference type="SUPFAM" id="SSF50615">
    <property type="entry name" value="N-terminal domain of alpha and beta subunits of F1 ATP synthase"/>
    <property type="match status" value="1"/>
</dbReference>
<dbReference type="SUPFAM" id="SSF52540">
    <property type="entry name" value="P-loop containing nucleoside triphosphate hydrolases"/>
    <property type="match status" value="1"/>
</dbReference>
<dbReference type="PROSITE" id="PS00152">
    <property type="entry name" value="ATPASE_ALPHA_BETA"/>
    <property type="match status" value="1"/>
</dbReference>
<evidence type="ECO:0000255" key="1">
    <source>
        <dbReference type="HAMAP-Rule" id="MF_01346"/>
    </source>
</evidence>
<reference key="1">
    <citation type="journal article" date="2003" name="Lancet">
        <title>Genome sequence of Vibrio parahaemolyticus: a pathogenic mechanism distinct from that of V. cholerae.</title>
        <authorList>
            <person name="Makino K."/>
            <person name="Oshima K."/>
            <person name="Kurokawa K."/>
            <person name="Yokoyama K."/>
            <person name="Uda T."/>
            <person name="Tagomori K."/>
            <person name="Iijima Y."/>
            <person name="Najima M."/>
            <person name="Nakano M."/>
            <person name="Yamashita A."/>
            <person name="Kubota Y."/>
            <person name="Kimura S."/>
            <person name="Yasunaga T."/>
            <person name="Honda T."/>
            <person name="Shinagawa H."/>
            <person name="Hattori M."/>
            <person name="Iida T."/>
        </authorList>
    </citation>
    <scope>NUCLEOTIDE SEQUENCE [LARGE SCALE GENOMIC DNA]</scope>
    <source>
        <strain>RIMD 2210633</strain>
    </source>
</reference>
<keyword id="KW-0066">ATP synthesis</keyword>
<keyword id="KW-0067">ATP-binding</keyword>
<keyword id="KW-0997">Cell inner membrane</keyword>
<keyword id="KW-1003">Cell membrane</keyword>
<keyword id="KW-0139">CF(1)</keyword>
<keyword id="KW-0375">Hydrogen ion transport</keyword>
<keyword id="KW-0406">Ion transport</keyword>
<keyword id="KW-0472">Membrane</keyword>
<keyword id="KW-0547">Nucleotide-binding</keyword>
<keyword id="KW-1278">Translocase</keyword>
<keyword id="KW-0813">Transport</keyword>
<name>ATPA_VIBPA</name>
<proteinExistence type="inferred from homology"/>